<accession>P24077</accession>
<accession>Q2MBL0</accession>
<name>ENTS_ECOLI</name>
<organism>
    <name type="scientific">Escherichia coli (strain K12)</name>
    <dbReference type="NCBI Taxonomy" id="83333"/>
    <lineage>
        <taxon>Bacteria</taxon>
        <taxon>Pseudomonadati</taxon>
        <taxon>Pseudomonadota</taxon>
        <taxon>Gammaproteobacteria</taxon>
        <taxon>Enterobacterales</taxon>
        <taxon>Enterobacteriaceae</taxon>
        <taxon>Escherichia</taxon>
    </lineage>
</organism>
<protein>
    <recommendedName>
        <fullName evidence="1 6">Enterobactin exporter EntS</fullName>
    </recommendedName>
    <alternativeName>
        <fullName>Protein p43</fullName>
    </alternativeName>
</protein>
<feature type="chain" id="PRO_0000168661" description="Enterobactin exporter EntS">
    <location>
        <begin position="1"/>
        <end position="416"/>
    </location>
</feature>
<feature type="topological domain" description="Cytoplasmic" evidence="1 6">
    <location>
        <begin position="1"/>
        <end position="21"/>
    </location>
</feature>
<feature type="transmembrane region" description="Helical" evidence="1">
    <location>
        <begin position="22"/>
        <end position="42"/>
    </location>
</feature>
<feature type="topological domain" description="Periplasmic" evidence="1 6">
    <location>
        <begin position="43"/>
        <end position="55"/>
    </location>
</feature>
<feature type="transmembrane region" description="Helical" evidence="1">
    <location>
        <begin position="56"/>
        <end position="76"/>
    </location>
</feature>
<feature type="topological domain" description="Cytoplasmic" evidence="1 6">
    <location>
        <begin position="77"/>
        <end position="83"/>
    </location>
</feature>
<feature type="transmembrane region" description="Helical" evidence="1">
    <location>
        <begin position="84"/>
        <end position="104"/>
    </location>
</feature>
<feature type="topological domain" description="Periplasmic" evidence="1 6">
    <location>
        <begin position="105"/>
        <end position="109"/>
    </location>
</feature>
<feature type="transmembrane region" description="Helical" evidence="1">
    <location>
        <begin position="110"/>
        <end position="130"/>
    </location>
</feature>
<feature type="topological domain" description="Cytoplasmic" evidence="1 6">
    <location>
        <begin position="131"/>
        <end position="156"/>
    </location>
</feature>
<feature type="transmembrane region" description="Helical" evidence="1">
    <location>
        <begin position="157"/>
        <end position="177"/>
    </location>
</feature>
<feature type="topological domain" description="Periplasmic" evidence="1 6">
    <location>
        <position position="178"/>
    </location>
</feature>
<feature type="transmembrane region" description="Helical" evidence="1">
    <location>
        <begin position="179"/>
        <end position="199"/>
    </location>
</feature>
<feature type="topological domain" description="Cytoplasmic" evidence="1 6">
    <location>
        <begin position="200"/>
        <end position="218"/>
    </location>
</feature>
<feature type="transmembrane region" description="Helical" evidence="1">
    <location>
        <begin position="219"/>
        <end position="239"/>
    </location>
</feature>
<feature type="topological domain" description="Periplasmic" evidence="1 6">
    <location>
        <begin position="240"/>
        <end position="256"/>
    </location>
</feature>
<feature type="transmembrane region" description="Helical" evidence="1">
    <location>
        <begin position="257"/>
        <end position="277"/>
    </location>
</feature>
<feature type="topological domain" description="Cytoplasmic" evidence="1 6">
    <location>
        <begin position="278"/>
        <end position="287"/>
    </location>
</feature>
<feature type="transmembrane region" description="Helical" evidence="1">
    <location>
        <begin position="288"/>
        <end position="307"/>
    </location>
</feature>
<feature type="topological domain" description="Periplasmic" evidence="1 6">
    <location>
        <begin position="308"/>
        <end position="313"/>
    </location>
</feature>
<feature type="transmembrane region" description="Helical" evidence="1">
    <location>
        <begin position="314"/>
        <end position="336"/>
    </location>
</feature>
<feature type="topological domain" description="Cytoplasmic" evidence="1 6">
    <location>
        <begin position="337"/>
        <end position="356"/>
    </location>
</feature>
<feature type="transmembrane region" description="Helical" evidence="1">
    <location>
        <begin position="357"/>
        <end position="377"/>
    </location>
</feature>
<feature type="topological domain" description="Periplasmic" evidence="1 6">
    <location>
        <position position="378"/>
    </location>
</feature>
<feature type="transmembrane region" description="Helical" evidence="1">
    <location>
        <begin position="379"/>
        <end position="399"/>
    </location>
</feature>
<feature type="topological domain" description="Cytoplasmic" evidence="1 3">
    <location>
        <begin position="400"/>
        <end position="416"/>
    </location>
</feature>
<feature type="sequence conflict" description="In Ref. 1; CAA40706." evidence="6" ref="1">
    <original>F</original>
    <variation>S</variation>
    <location>
        <position position="123"/>
    </location>
</feature>
<keyword id="KW-0997">Cell inner membrane</keyword>
<keyword id="KW-1003">Cell membrane</keyword>
<keyword id="KW-0472">Membrane</keyword>
<keyword id="KW-1185">Reference proteome</keyword>
<keyword id="KW-0812">Transmembrane</keyword>
<keyword id="KW-1133">Transmembrane helix</keyword>
<keyword id="KW-0813">Transport</keyword>
<evidence type="ECO:0000255" key="1">
    <source>
        <dbReference type="HAMAP-Rule" id="MF_01436"/>
    </source>
</evidence>
<evidence type="ECO:0000269" key="2">
    <source>
    </source>
</evidence>
<evidence type="ECO:0000269" key="3">
    <source>
    </source>
</evidence>
<evidence type="ECO:0000269" key="4">
    <source>
    </source>
</evidence>
<evidence type="ECO:0000303" key="5">
    <source>
    </source>
</evidence>
<evidence type="ECO:0000305" key="6"/>
<sequence length="416" mass="43282">MNKQSWLLNLSLLKTHPAFRAVFLARFISIVSLGLLGVAVPVQIQMMTHSTWQVGLSVTLTGGAMFVGLMVGGVLADRYERKKVILLARGTCGIGFIGLCLNALLPEPSLLAIYLLGLWDGFFASLGVTALLAATPALVGRENLMQAGAITMLTVRLGSVISPMIGGLLLATGGVAWNYGLAAAGTFITLLPLLSLPALPPPPQPREHPLKSLLAGFRFLLASPLVGGIALLGGLLTMASAVRVLYPALADNWQMSAAQIGFLYAAIPLGAAIGALTSGKLAHSARPGLLMLLSTLGSFLAIGLFGLMPMWILGVVCLALFGWLSAVSSLLQYTMLQTQTPEAMLGRINGLWTAQNVTGDAIGAALLGGLGAMMTPVASASASGFGLLIIGVLLLLVLVELRHFRQTPPQVTASDS</sequence>
<comment type="function">
    <text evidence="2 4">Component of an export pathway for enterobactin (PubMed:12068807). Overexpression reduces intracellular arabinose concentrations (PubMed:22952739).</text>
</comment>
<comment type="subcellular location">
    <subcellularLocation>
        <location evidence="1 3">Cell inner membrane</location>
        <topology evidence="1">Multi-pass membrane protein</topology>
    </subcellularLocation>
</comment>
<comment type="disruption phenotype">
    <text evidence="2">Mutant is unable to secrete enterobactin efficiently. It secretes little, if any, enterobactin, but elevated levels of enterobactin breakdown products 2,3-dihydroxybenzoylserine (DHBS) monomer, dimer and trimer.</text>
</comment>
<comment type="similarity">
    <text evidence="1 6">Belongs to the major facilitator superfamily. EntS (TC 2.A.1.38) family.</text>
</comment>
<reference key="1">
    <citation type="journal article" date="1991" name="Mol. Microbiol.">
        <title>Nucleotide sequence and genetic organization of the ferric enterobactin transport system: homology to other periplasmic binding protein-dependent systems in Escherichia coli.</title>
        <authorList>
            <person name="Shea C.M."/>
            <person name="McIntosh M.A."/>
        </authorList>
    </citation>
    <scope>NUCLEOTIDE SEQUENCE [GENOMIC DNA]</scope>
    <source>
        <strain>K12</strain>
    </source>
</reference>
<reference key="2">
    <citation type="journal article" date="1991" name="Mol. Microbiol.">
        <title>Organization of genes encoding membrane proteins of the Escherichia coli ferrienterobactin permease.</title>
        <authorList>
            <person name="Chenault S.S."/>
            <person name="Earhart C.F."/>
        </authorList>
    </citation>
    <scope>NUCLEOTIDE SEQUENCE [GENOMIC DNA]</scope>
    <source>
        <strain>K12</strain>
    </source>
</reference>
<reference key="3">
    <citation type="submission" date="1997-01" db="EMBL/GenBank/DDBJ databases">
        <title>Sequence of minutes 4-25 of Escherichia coli.</title>
        <authorList>
            <person name="Chung E."/>
            <person name="Allen E."/>
            <person name="Araujo R."/>
            <person name="Aparicio A.M."/>
            <person name="Davis K."/>
            <person name="Duncan M."/>
            <person name="Federspiel N."/>
            <person name="Hyman R."/>
            <person name="Kalman S."/>
            <person name="Komp C."/>
            <person name="Kurdi O."/>
            <person name="Lew H."/>
            <person name="Lin D."/>
            <person name="Namath A."/>
            <person name="Oefner P."/>
            <person name="Roberts D."/>
            <person name="Schramm S."/>
            <person name="Davis R.W."/>
        </authorList>
    </citation>
    <scope>NUCLEOTIDE SEQUENCE [LARGE SCALE GENOMIC DNA]</scope>
    <source>
        <strain>K12 / MG1655 / ATCC 47076</strain>
    </source>
</reference>
<reference key="4">
    <citation type="journal article" date="1997" name="Science">
        <title>The complete genome sequence of Escherichia coli K-12.</title>
        <authorList>
            <person name="Blattner F.R."/>
            <person name="Plunkett G. III"/>
            <person name="Bloch C.A."/>
            <person name="Perna N.T."/>
            <person name="Burland V."/>
            <person name="Riley M."/>
            <person name="Collado-Vides J."/>
            <person name="Glasner J.D."/>
            <person name="Rode C.K."/>
            <person name="Mayhew G.F."/>
            <person name="Gregor J."/>
            <person name="Davis N.W."/>
            <person name="Kirkpatrick H.A."/>
            <person name="Goeden M.A."/>
            <person name="Rose D.J."/>
            <person name="Mau B."/>
            <person name="Shao Y."/>
        </authorList>
    </citation>
    <scope>NUCLEOTIDE SEQUENCE [LARGE SCALE GENOMIC DNA]</scope>
    <source>
        <strain>K12 / MG1655 / ATCC 47076</strain>
    </source>
</reference>
<reference key="5">
    <citation type="journal article" date="2006" name="Mol. Syst. Biol.">
        <title>Highly accurate genome sequences of Escherichia coli K-12 strains MG1655 and W3110.</title>
        <authorList>
            <person name="Hayashi K."/>
            <person name="Morooka N."/>
            <person name="Yamamoto Y."/>
            <person name="Fujita K."/>
            <person name="Isono K."/>
            <person name="Choi S."/>
            <person name="Ohtsubo E."/>
            <person name="Baba T."/>
            <person name="Wanner B.L."/>
            <person name="Mori H."/>
            <person name="Horiuchi T."/>
        </authorList>
    </citation>
    <scope>NUCLEOTIDE SEQUENCE [LARGE SCALE GENOMIC DNA]</scope>
    <source>
        <strain>K12 / W3110 / ATCC 27325 / DSM 5911</strain>
    </source>
</reference>
<reference key="6">
    <citation type="journal article" date="2002" name="Mol. Microbiol.">
        <title>Export of the siderophore enterobactin in Escherichia coli: involvement of a 43 kDa membrane exporter.</title>
        <authorList>
            <person name="Furrer J.L."/>
            <person name="Sanders D.N."/>
            <person name="Hook-Barnard I.G."/>
            <person name="McIntosh M.A."/>
        </authorList>
    </citation>
    <scope>FUNCTION</scope>
    <scope>DISRUPTION PHENOTYPE</scope>
    <source>
        <strain>BM694</strain>
    </source>
</reference>
<reference key="7">
    <citation type="journal article" date="2005" name="Science">
        <title>Global topology analysis of the Escherichia coli inner membrane proteome.</title>
        <authorList>
            <person name="Daley D.O."/>
            <person name="Rapp M."/>
            <person name="Granseth E."/>
            <person name="Melen K."/>
            <person name="Drew D."/>
            <person name="von Heijne G."/>
        </authorList>
    </citation>
    <scope>TOPOLOGY [LARGE SCALE ANALYSIS]</scope>
    <scope>SUBCELLULAR LOCATION</scope>
    <source>
        <strain>K12 / MG1655 / ATCC 47076</strain>
    </source>
</reference>
<reference key="8">
    <citation type="journal article" date="2012" name="PLoS ONE">
        <title>Identification and analysis of the putative pentose sugar efflux transporters in Escherichia coli.</title>
        <authorList>
            <person name="Koita K."/>
            <person name="Rao C.V."/>
        </authorList>
    </citation>
    <scope>FUNCTION</scope>
</reference>
<gene>
    <name evidence="1 5" type="primary">entS</name>
    <name type="synonym">ybdA</name>
    <name type="ordered locus">b0591</name>
    <name type="ordered locus">JW0583</name>
</gene>
<dbReference type="EMBL" id="X57470">
    <property type="protein sequence ID" value="CAA40706.1"/>
    <property type="molecule type" value="Genomic_DNA"/>
</dbReference>
<dbReference type="EMBL" id="X59402">
    <property type="protein sequence ID" value="CAA42044.1"/>
    <property type="molecule type" value="Genomic_DNA"/>
</dbReference>
<dbReference type="EMBL" id="U82598">
    <property type="protein sequence ID" value="AAB40790.1"/>
    <property type="molecule type" value="Genomic_DNA"/>
</dbReference>
<dbReference type="EMBL" id="U00096">
    <property type="protein sequence ID" value="AAC73692.1"/>
    <property type="molecule type" value="Genomic_DNA"/>
</dbReference>
<dbReference type="EMBL" id="AP009048">
    <property type="protein sequence ID" value="BAE76346.1"/>
    <property type="molecule type" value="Genomic_DNA"/>
</dbReference>
<dbReference type="PIR" id="S16306">
    <property type="entry name" value="S16306"/>
</dbReference>
<dbReference type="RefSeq" id="NP_415123.1">
    <property type="nucleotide sequence ID" value="NC_000913.3"/>
</dbReference>
<dbReference type="RefSeq" id="WP_001041786.1">
    <property type="nucleotide sequence ID" value="NZ_SSZK01000032.1"/>
</dbReference>
<dbReference type="SMR" id="P24077"/>
<dbReference type="BioGRID" id="4260903">
    <property type="interactions" value="384"/>
</dbReference>
<dbReference type="FunCoup" id="P24077">
    <property type="interactions" value="179"/>
</dbReference>
<dbReference type="STRING" id="511145.b0591"/>
<dbReference type="TCDB" id="2.A.1.38.1">
    <property type="family name" value="the major facilitator superfamily (mfs)"/>
</dbReference>
<dbReference type="PaxDb" id="511145-b0591"/>
<dbReference type="EnsemblBacteria" id="AAC73692">
    <property type="protein sequence ID" value="AAC73692"/>
    <property type="gene ID" value="b0591"/>
</dbReference>
<dbReference type="GeneID" id="946268"/>
<dbReference type="KEGG" id="ecj:JW0583"/>
<dbReference type="KEGG" id="eco:b0591"/>
<dbReference type="KEGG" id="ecoc:C3026_02950"/>
<dbReference type="PATRIC" id="fig|1411691.4.peg.1678"/>
<dbReference type="EchoBASE" id="EB1096"/>
<dbReference type="eggNOG" id="COG0477">
    <property type="taxonomic scope" value="Bacteria"/>
</dbReference>
<dbReference type="HOGENOM" id="CLU_034180_11_0_6"/>
<dbReference type="InParanoid" id="P24077"/>
<dbReference type="OMA" id="VQVWHVY"/>
<dbReference type="OrthoDB" id="7283966at2"/>
<dbReference type="PhylomeDB" id="P24077"/>
<dbReference type="BioCyc" id="EcoCyc:YBDA-MONOMER"/>
<dbReference type="BioCyc" id="MetaCyc:YBDA-MONOMER"/>
<dbReference type="PRO" id="PR:P24077"/>
<dbReference type="Proteomes" id="UP000000625">
    <property type="component" value="Chromosome"/>
</dbReference>
<dbReference type="GO" id="GO:0005886">
    <property type="term" value="C:plasma membrane"/>
    <property type="evidence" value="ECO:0000314"/>
    <property type="project" value="EcoCyc"/>
</dbReference>
<dbReference type="GO" id="GO:0015562">
    <property type="term" value="F:efflux transmembrane transporter activity"/>
    <property type="evidence" value="ECO:0000318"/>
    <property type="project" value="GO_Central"/>
</dbReference>
<dbReference type="GO" id="GO:0042931">
    <property type="term" value="F:enterobactin transmembrane transporter activity"/>
    <property type="evidence" value="ECO:0007669"/>
    <property type="project" value="InterPro"/>
</dbReference>
<dbReference type="GO" id="GO:0006974">
    <property type="term" value="P:DNA damage response"/>
    <property type="evidence" value="ECO:0000315"/>
    <property type="project" value="EcoCyc"/>
</dbReference>
<dbReference type="GO" id="GO:0042930">
    <property type="term" value="P:enterobactin transport"/>
    <property type="evidence" value="ECO:0000315"/>
    <property type="project" value="EcoliWiki"/>
</dbReference>
<dbReference type="GO" id="GO:0046677">
    <property type="term" value="P:response to antibiotic"/>
    <property type="evidence" value="ECO:0000315"/>
    <property type="project" value="EcoCyc"/>
</dbReference>
<dbReference type="CDD" id="cd06173">
    <property type="entry name" value="MFS_MefA_like"/>
    <property type="match status" value="1"/>
</dbReference>
<dbReference type="FunFam" id="1.20.1250.20:FF:000056">
    <property type="entry name" value="Enterobactin exporter EntS"/>
    <property type="match status" value="1"/>
</dbReference>
<dbReference type="Gene3D" id="1.20.1250.20">
    <property type="entry name" value="MFS general substrate transporter like domains"/>
    <property type="match status" value="1"/>
</dbReference>
<dbReference type="HAMAP" id="MF_01436">
    <property type="entry name" value="MFS_EntS"/>
    <property type="match status" value="1"/>
</dbReference>
<dbReference type="InterPro" id="IPR023722">
    <property type="entry name" value="Enterobactin_exp_EntS"/>
</dbReference>
<dbReference type="InterPro" id="IPR020846">
    <property type="entry name" value="MFS_dom"/>
</dbReference>
<dbReference type="InterPro" id="IPR036259">
    <property type="entry name" value="MFS_trans_sf"/>
</dbReference>
<dbReference type="InterPro" id="IPR010290">
    <property type="entry name" value="TM_effector"/>
</dbReference>
<dbReference type="NCBIfam" id="NF007792">
    <property type="entry name" value="PRK10489.1"/>
    <property type="match status" value="1"/>
</dbReference>
<dbReference type="PANTHER" id="PTHR23513:SF9">
    <property type="entry name" value="ENTEROBACTIN EXPORTER ENTS"/>
    <property type="match status" value="1"/>
</dbReference>
<dbReference type="PANTHER" id="PTHR23513">
    <property type="entry name" value="INTEGRAL MEMBRANE EFFLUX PROTEIN-RELATED"/>
    <property type="match status" value="1"/>
</dbReference>
<dbReference type="Pfam" id="PF05977">
    <property type="entry name" value="MFS_3"/>
    <property type="match status" value="1"/>
</dbReference>
<dbReference type="SUPFAM" id="SSF103473">
    <property type="entry name" value="MFS general substrate transporter"/>
    <property type="match status" value="1"/>
</dbReference>
<dbReference type="PROSITE" id="PS50850">
    <property type="entry name" value="MFS"/>
    <property type="match status" value="1"/>
</dbReference>
<proteinExistence type="evidence at protein level"/>